<name>EFP_MESHJ</name>
<keyword id="KW-0963">Cytoplasm</keyword>
<keyword id="KW-0251">Elongation factor</keyword>
<keyword id="KW-0648">Protein biosynthesis</keyword>
<protein>
    <recommendedName>
        <fullName evidence="1">Elongation factor P</fullName>
        <shortName evidence="1">EF-P</shortName>
    </recommendedName>
</protein>
<gene>
    <name evidence="1" type="primary">efp</name>
    <name type="ordered locus">MHJ_0425</name>
</gene>
<evidence type="ECO:0000255" key="1">
    <source>
        <dbReference type="HAMAP-Rule" id="MF_00141"/>
    </source>
</evidence>
<feature type="chain" id="PRO_1000010781" description="Elongation factor P">
    <location>
        <begin position="1"/>
        <end position="185"/>
    </location>
</feature>
<sequence>MINVNEFRPGITFEFENEIYVVISAQHSKQGRGQANVKTKVKNLRTGAITIKTFSGGERVEKAHIEKISMSFLYNDGASIVLMDDSTYEQVAIENTKITWELNFLTEGIKVKLRKFNNEILDIELPAKIELKITSTFDAVRGNTTTNPTKRATLETGYEIDVPLFIKEGESVIVSTEDGKYVSRG</sequence>
<proteinExistence type="inferred from homology"/>
<dbReference type="EMBL" id="AE017243">
    <property type="protein sequence ID" value="AAZ44511.1"/>
    <property type="molecule type" value="Genomic_DNA"/>
</dbReference>
<dbReference type="RefSeq" id="WP_011284183.1">
    <property type="nucleotide sequence ID" value="NC_007295.1"/>
</dbReference>
<dbReference type="SMR" id="Q4A9R0"/>
<dbReference type="GeneID" id="41334725"/>
<dbReference type="KEGG" id="mhj:MHJ_0425"/>
<dbReference type="eggNOG" id="COG0231">
    <property type="taxonomic scope" value="Bacteria"/>
</dbReference>
<dbReference type="HOGENOM" id="CLU_074944_2_1_14"/>
<dbReference type="OrthoDB" id="9801844at2"/>
<dbReference type="UniPathway" id="UPA00345"/>
<dbReference type="Proteomes" id="UP000000548">
    <property type="component" value="Chromosome"/>
</dbReference>
<dbReference type="GO" id="GO:0005737">
    <property type="term" value="C:cytoplasm"/>
    <property type="evidence" value="ECO:0007669"/>
    <property type="project" value="UniProtKB-SubCell"/>
</dbReference>
<dbReference type="GO" id="GO:0003746">
    <property type="term" value="F:translation elongation factor activity"/>
    <property type="evidence" value="ECO:0007669"/>
    <property type="project" value="UniProtKB-UniRule"/>
</dbReference>
<dbReference type="GO" id="GO:0043043">
    <property type="term" value="P:peptide biosynthetic process"/>
    <property type="evidence" value="ECO:0007669"/>
    <property type="project" value="InterPro"/>
</dbReference>
<dbReference type="CDD" id="cd04470">
    <property type="entry name" value="S1_EF-P_repeat_1"/>
    <property type="match status" value="1"/>
</dbReference>
<dbReference type="CDD" id="cd05794">
    <property type="entry name" value="S1_EF-P_repeat_2"/>
    <property type="match status" value="1"/>
</dbReference>
<dbReference type="FunFam" id="2.30.30.30:FF:000003">
    <property type="entry name" value="Elongation factor P"/>
    <property type="match status" value="1"/>
</dbReference>
<dbReference type="FunFam" id="2.40.50.140:FF:000004">
    <property type="entry name" value="Elongation factor P"/>
    <property type="match status" value="1"/>
</dbReference>
<dbReference type="FunFam" id="2.40.50.140:FF:000009">
    <property type="entry name" value="Elongation factor P"/>
    <property type="match status" value="1"/>
</dbReference>
<dbReference type="Gene3D" id="2.30.30.30">
    <property type="match status" value="1"/>
</dbReference>
<dbReference type="Gene3D" id="2.40.50.140">
    <property type="entry name" value="Nucleic acid-binding proteins"/>
    <property type="match status" value="2"/>
</dbReference>
<dbReference type="HAMAP" id="MF_00141">
    <property type="entry name" value="EF_P"/>
    <property type="match status" value="1"/>
</dbReference>
<dbReference type="InterPro" id="IPR015365">
    <property type="entry name" value="Elong-fact-P_C"/>
</dbReference>
<dbReference type="InterPro" id="IPR012340">
    <property type="entry name" value="NA-bd_OB-fold"/>
</dbReference>
<dbReference type="InterPro" id="IPR014722">
    <property type="entry name" value="Rib_uL2_dom2"/>
</dbReference>
<dbReference type="InterPro" id="IPR020599">
    <property type="entry name" value="Transl_elong_fac_P/YeiP"/>
</dbReference>
<dbReference type="InterPro" id="IPR013185">
    <property type="entry name" value="Transl_elong_KOW-like"/>
</dbReference>
<dbReference type="InterPro" id="IPR001059">
    <property type="entry name" value="Transl_elong_P/YeiP_cen"/>
</dbReference>
<dbReference type="InterPro" id="IPR013852">
    <property type="entry name" value="Transl_elong_P/YeiP_CS"/>
</dbReference>
<dbReference type="InterPro" id="IPR011768">
    <property type="entry name" value="Transl_elongation_fac_P"/>
</dbReference>
<dbReference type="InterPro" id="IPR008991">
    <property type="entry name" value="Translation_prot_SH3-like_sf"/>
</dbReference>
<dbReference type="NCBIfam" id="TIGR00038">
    <property type="entry name" value="efp"/>
    <property type="match status" value="1"/>
</dbReference>
<dbReference type="NCBIfam" id="NF001810">
    <property type="entry name" value="PRK00529.1"/>
    <property type="match status" value="1"/>
</dbReference>
<dbReference type="PANTHER" id="PTHR30053">
    <property type="entry name" value="ELONGATION FACTOR P"/>
    <property type="match status" value="1"/>
</dbReference>
<dbReference type="PANTHER" id="PTHR30053:SF12">
    <property type="entry name" value="ELONGATION FACTOR P (EF-P) FAMILY PROTEIN"/>
    <property type="match status" value="1"/>
</dbReference>
<dbReference type="Pfam" id="PF01132">
    <property type="entry name" value="EFP"/>
    <property type="match status" value="1"/>
</dbReference>
<dbReference type="Pfam" id="PF08207">
    <property type="entry name" value="EFP_N"/>
    <property type="match status" value="1"/>
</dbReference>
<dbReference type="Pfam" id="PF09285">
    <property type="entry name" value="Elong-fact-P_C"/>
    <property type="match status" value="1"/>
</dbReference>
<dbReference type="PIRSF" id="PIRSF005901">
    <property type="entry name" value="EF-P"/>
    <property type="match status" value="1"/>
</dbReference>
<dbReference type="SMART" id="SM01185">
    <property type="entry name" value="EFP"/>
    <property type="match status" value="1"/>
</dbReference>
<dbReference type="SMART" id="SM00841">
    <property type="entry name" value="Elong-fact-P_C"/>
    <property type="match status" value="1"/>
</dbReference>
<dbReference type="SUPFAM" id="SSF50249">
    <property type="entry name" value="Nucleic acid-binding proteins"/>
    <property type="match status" value="2"/>
</dbReference>
<dbReference type="SUPFAM" id="SSF50104">
    <property type="entry name" value="Translation proteins SH3-like domain"/>
    <property type="match status" value="1"/>
</dbReference>
<dbReference type="PROSITE" id="PS01275">
    <property type="entry name" value="EFP"/>
    <property type="match status" value="1"/>
</dbReference>
<comment type="function">
    <text evidence="1">Involved in peptide bond synthesis. Stimulates efficient translation and peptide-bond synthesis on native or reconstituted 70S ribosomes in vitro. Probably functions indirectly by altering the affinity of the ribosome for aminoacyl-tRNA, thus increasing their reactivity as acceptors for peptidyl transferase.</text>
</comment>
<comment type="pathway">
    <text evidence="1">Protein biosynthesis; polypeptide chain elongation.</text>
</comment>
<comment type="subcellular location">
    <subcellularLocation>
        <location evidence="1">Cytoplasm</location>
    </subcellularLocation>
</comment>
<comment type="similarity">
    <text evidence="1">Belongs to the elongation factor P family.</text>
</comment>
<accession>Q4A9R0</accession>
<organism>
    <name type="scientific">Mesomycoplasma hyopneumoniae (strain J / ATCC 25934 / NCTC 10110)</name>
    <name type="common">Mycoplasma hyopneumoniae</name>
    <dbReference type="NCBI Taxonomy" id="262719"/>
    <lineage>
        <taxon>Bacteria</taxon>
        <taxon>Bacillati</taxon>
        <taxon>Mycoplasmatota</taxon>
        <taxon>Mycoplasmoidales</taxon>
        <taxon>Metamycoplasmataceae</taxon>
        <taxon>Mesomycoplasma</taxon>
    </lineage>
</organism>
<reference key="1">
    <citation type="journal article" date="2005" name="J. Bacteriol.">
        <title>Swine and poultry pathogens: the complete genome sequences of two strains of Mycoplasma hyopneumoniae and a strain of Mycoplasma synoviae.</title>
        <authorList>
            <person name="Vasconcelos A.T.R."/>
            <person name="Ferreira H.B."/>
            <person name="Bizarro C.V."/>
            <person name="Bonatto S.L."/>
            <person name="Carvalho M.O."/>
            <person name="Pinto P.M."/>
            <person name="Almeida D.F."/>
            <person name="Almeida L.G.P."/>
            <person name="Almeida R."/>
            <person name="Alves-Junior L."/>
            <person name="Assuncao E.N."/>
            <person name="Azevedo V.A.C."/>
            <person name="Bogo M.R."/>
            <person name="Brigido M.M."/>
            <person name="Brocchi M."/>
            <person name="Burity H.A."/>
            <person name="Camargo A.A."/>
            <person name="Camargo S.S."/>
            <person name="Carepo M.S."/>
            <person name="Carraro D.M."/>
            <person name="de Mattos Cascardo J.C."/>
            <person name="Castro L.A."/>
            <person name="Cavalcanti G."/>
            <person name="Chemale G."/>
            <person name="Collevatti R.G."/>
            <person name="Cunha C.W."/>
            <person name="Dallagiovanna B."/>
            <person name="Dambros B.P."/>
            <person name="Dellagostin O.A."/>
            <person name="Falcao C."/>
            <person name="Fantinatti-Garboggini F."/>
            <person name="Felipe M.S.S."/>
            <person name="Fiorentin L."/>
            <person name="Franco G.R."/>
            <person name="Freitas N.S.A."/>
            <person name="Frias D."/>
            <person name="Grangeiro T.B."/>
            <person name="Grisard E.C."/>
            <person name="Guimaraes C.T."/>
            <person name="Hungria M."/>
            <person name="Jardim S.N."/>
            <person name="Krieger M.A."/>
            <person name="Laurino J.P."/>
            <person name="Lima L.F.A."/>
            <person name="Lopes M.I."/>
            <person name="Loreto E.L.S."/>
            <person name="Madeira H.M.F."/>
            <person name="Manfio G.P."/>
            <person name="Maranhao A.Q."/>
            <person name="Martinkovics C.T."/>
            <person name="Medeiros S.R.B."/>
            <person name="Moreira M.A.M."/>
            <person name="Neiva M."/>
            <person name="Ramalho-Neto C.E."/>
            <person name="Nicolas M.F."/>
            <person name="Oliveira S.C."/>
            <person name="Paixao R.F.C."/>
            <person name="Pedrosa F.O."/>
            <person name="Pena S.D.J."/>
            <person name="Pereira M."/>
            <person name="Pereira-Ferrari L."/>
            <person name="Piffer I."/>
            <person name="Pinto L.S."/>
            <person name="Potrich D.P."/>
            <person name="Salim A.C.M."/>
            <person name="Santos F.R."/>
            <person name="Schmitt R."/>
            <person name="Schneider M.P.C."/>
            <person name="Schrank A."/>
            <person name="Schrank I.S."/>
            <person name="Schuck A.F."/>
            <person name="Seuanez H.N."/>
            <person name="Silva D.W."/>
            <person name="Silva R."/>
            <person name="Silva S.C."/>
            <person name="Soares C.M.A."/>
            <person name="Souza K.R.L."/>
            <person name="Souza R.C."/>
            <person name="Staats C.C."/>
            <person name="Steffens M.B.R."/>
            <person name="Teixeira S.M.R."/>
            <person name="Urmenyi T.P."/>
            <person name="Vainstein M.H."/>
            <person name="Zuccherato L.W."/>
            <person name="Simpson A.J.G."/>
            <person name="Zaha A."/>
        </authorList>
    </citation>
    <scope>NUCLEOTIDE SEQUENCE [LARGE SCALE GENOMIC DNA]</scope>
    <source>
        <strain>J / ATCC 25934 / NCTC 10110</strain>
    </source>
</reference>